<feature type="chain" id="PRO_1000061125" description="Adenosylhomocysteinase">
    <location>
        <begin position="1"/>
        <end position="430"/>
    </location>
</feature>
<feature type="binding site" evidence="1">
    <location>
        <position position="56"/>
    </location>
    <ligand>
        <name>substrate</name>
    </ligand>
</feature>
<feature type="binding site" evidence="1">
    <location>
        <position position="131"/>
    </location>
    <ligand>
        <name>substrate</name>
    </ligand>
</feature>
<feature type="binding site" evidence="1">
    <location>
        <position position="156"/>
    </location>
    <ligand>
        <name>substrate</name>
    </ligand>
</feature>
<feature type="binding site" evidence="1">
    <location>
        <begin position="157"/>
        <end position="159"/>
    </location>
    <ligand>
        <name>NAD(+)</name>
        <dbReference type="ChEBI" id="CHEBI:57540"/>
    </ligand>
</feature>
<feature type="binding site" evidence="1">
    <location>
        <position position="186"/>
    </location>
    <ligand>
        <name>substrate</name>
    </ligand>
</feature>
<feature type="binding site" evidence="1">
    <location>
        <position position="190"/>
    </location>
    <ligand>
        <name>substrate</name>
    </ligand>
</feature>
<feature type="binding site" evidence="1">
    <location>
        <position position="191"/>
    </location>
    <ligand>
        <name>NAD(+)</name>
        <dbReference type="ChEBI" id="CHEBI:57540"/>
    </ligand>
</feature>
<feature type="binding site" evidence="1">
    <location>
        <begin position="220"/>
        <end position="225"/>
    </location>
    <ligand>
        <name>NAD(+)</name>
        <dbReference type="ChEBI" id="CHEBI:57540"/>
    </ligand>
</feature>
<feature type="binding site" evidence="1">
    <location>
        <position position="243"/>
    </location>
    <ligand>
        <name>NAD(+)</name>
        <dbReference type="ChEBI" id="CHEBI:57540"/>
    </ligand>
</feature>
<feature type="binding site" evidence="1">
    <location>
        <position position="278"/>
    </location>
    <ligand>
        <name>NAD(+)</name>
        <dbReference type="ChEBI" id="CHEBI:57540"/>
    </ligand>
</feature>
<feature type="binding site" evidence="1">
    <location>
        <begin position="299"/>
        <end position="301"/>
    </location>
    <ligand>
        <name>NAD(+)</name>
        <dbReference type="ChEBI" id="CHEBI:57540"/>
    </ligand>
</feature>
<feature type="binding site" evidence="1">
    <location>
        <position position="344"/>
    </location>
    <ligand>
        <name>NAD(+)</name>
        <dbReference type="ChEBI" id="CHEBI:57540"/>
    </ligand>
</feature>
<keyword id="KW-0963">Cytoplasm</keyword>
<keyword id="KW-0378">Hydrolase</keyword>
<keyword id="KW-0520">NAD</keyword>
<keyword id="KW-0554">One-carbon metabolism</keyword>
<keyword id="KW-1185">Reference proteome</keyword>
<gene>
    <name evidence="1" type="primary">ahcY</name>
    <name type="ordered locus">Hhal_1675</name>
</gene>
<name>SAHH_HALHL</name>
<dbReference type="EC" id="3.13.2.1" evidence="1"/>
<dbReference type="EMBL" id="CP000544">
    <property type="protein sequence ID" value="ABM62439.1"/>
    <property type="molecule type" value="Genomic_DNA"/>
</dbReference>
<dbReference type="RefSeq" id="WP_011814461.1">
    <property type="nucleotide sequence ID" value="NC_008789.1"/>
</dbReference>
<dbReference type="SMR" id="A1WXM7"/>
<dbReference type="STRING" id="349124.Hhal_1675"/>
<dbReference type="KEGG" id="hha:Hhal_1675"/>
<dbReference type="eggNOG" id="COG0499">
    <property type="taxonomic scope" value="Bacteria"/>
</dbReference>
<dbReference type="HOGENOM" id="CLU_025194_2_1_6"/>
<dbReference type="OrthoDB" id="9802717at2"/>
<dbReference type="UniPathway" id="UPA00314">
    <property type="reaction ID" value="UER00076"/>
</dbReference>
<dbReference type="Proteomes" id="UP000000647">
    <property type="component" value="Chromosome"/>
</dbReference>
<dbReference type="GO" id="GO:0005829">
    <property type="term" value="C:cytosol"/>
    <property type="evidence" value="ECO:0007669"/>
    <property type="project" value="TreeGrafter"/>
</dbReference>
<dbReference type="GO" id="GO:0004013">
    <property type="term" value="F:adenosylhomocysteinase activity"/>
    <property type="evidence" value="ECO:0007669"/>
    <property type="project" value="UniProtKB-UniRule"/>
</dbReference>
<dbReference type="GO" id="GO:0071269">
    <property type="term" value="P:L-homocysteine biosynthetic process"/>
    <property type="evidence" value="ECO:0007669"/>
    <property type="project" value="UniProtKB-UniRule"/>
</dbReference>
<dbReference type="GO" id="GO:0006730">
    <property type="term" value="P:one-carbon metabolic process"/>
    <property type="evidence" value="ECO:0007669"/>
    <property type="project" value="UniProtKB-KW"/>
</dbReference>
<dbReference type="GO" id="GO:0033353">
    <property type="term" value="P:S-adenosylmethionine cycle"/>
    <property type="evidence" value="ECO:0007669"/>
    <property type="project" value="TreeGrafter"/>
</dbReference>
<dbReference type="CDD" id="cd00401">
    <property type="entry name" value="SAHH"/>
    <property type="match status" value="1"/>
</dbReference>
<dbReference type="FunFam" id="3.40.50.1480:FF:000004">
    <property type="entry name" value="Adenosylhomocysteinase"/>
    <property type="match status" value="1"/>
</dbReference>
<dbReference type="FunFam" id="3.40.50.720:FF:000004">
    <property type="entry name" value="Adenosylhomocysteinase"/>
    <property type="match status" value="1"/>
</dbReference>
<dbReference type="Gene3D" id="3.40.50.1480">
    <property type="entry name" value="Adenosylhomocysteinase-like"/>
    <property type="match status" value="1"/>
</dbReference>
<dbReference type="Gene3D" id="3.40.50.720">
    <property type="entry name" value="NAD(P)-binding Rossmann-like Domain"/>
    <property type="match status" value="1"/>
</dbReference>
<dbReference type="HAMAP" id="MF_00563">
    <property type="entry name" value="AdoHcyase"/>
    <property type="match status" value="1"/>
</dbReference>
<dbReference type="InterPro" id="IPR042172">
    <property type="entry name" value="Adenosylhomocyst_ase-like_sf"/>
</dbReference>
<dbReference type="InterPro" id="IPR000043">
    <property type="entry name" value="Adenosylhomocysteinase-like"/>
</dbReference>
<dbReference type="InterPro" id="IPR015878">
    <property type="entry name" value="Ado_hCys_hydrolase_NAD-bd"/>
</dbReference>
<dbReference type="InterPro" id="IPR036291">
    <property type="entry name" value="NAD(P)-bd_dom_sf"/>
</dbReference>
<dbReference type="InterPro" id="IPR020082">
    <property type="entry name" value="S-Ado-L-homoCys_hydrolase_CS"/>
</dbReference>
<dbReference type="NCBIfam" id="TIGR00936">
    <property type="entry name" value="ahcY"/>
    <property type="match status" value="1"/>
</dbReference>
<dbReference type="NCBIfam" id="NF004005">
    <property type="entry name" value="PRK05476.2-3"/>
    <property type="match status" value="1"/>
</dbReference>
<dbReference type="PANTHER" id="PTHR23420">
    <property type="entry name" value="ADENOSYLHOMOCYSTEINASE"/>
    <property type="match status" value="1"/>
</dbReference>
<dbReference type="PANTHER" id="PTHR23420:SF0">
    <property type="entry name" value="ADENOSYLHOMOCYSTEINASE"/>
    <property type="match status" value="1"/>
</dbReference>
<dbReference type="Pfam" id="PF05221">
    <property type="entry name" value="AdoHcyase"/>
    <property type="match status" value="1"/>
</dbReference>
<dbReference type="Pfam" id="PF00670">
    <property type="entry name" value="AdoHcyase_NAD"/>
    <property type="match status" value="1"/>
</dbReference>
<dbReference type="PIRSF" id="PIRSF001109">
    <property type="entry name" value="Ad_hcy_hydrolase"/>
    <property type="match status" value="1"/>
</dbReference>
<dbReference type="SMART" id="SM00996">
    <property type="entry name" value="AdoHcyase"/>
    <property type="match status" value="1"/>
</dbReference>
<dbReference type="SMART" id="SM00997">
    <property type="entry name" value="AdoHcyase_NAD"/>
    <property type="match status" value="1"/>
</dbReference>
<dbReference type="SUPFAM" id="SSF52283">
    <property type="entry name" value="Formate/glycerate dehydrogenase catalytic domain-like"/>
    <property type="match status" value="1"/>
</dbReference>
<dbReference type="SUPFAM" id="SSF51735">
    <property type="entry name" value="NAD(P)-binding Rossmann-fold domains"/>
    <property type="match status" value="1"/>
</dbReference>
<dbReference type="PROSITE" id="PS00738">
    <property type="entry name" value="ADOHCYASE_1"/>
    <property type="match status" value="1"/>
</dbReference>
<dbReference type="PROSITE" id="PS00739">
    <property type="entry name" value="ADOHCYASE_2"/>
    <property type="match status" value="1"/>
</dbReference>
<sequence>MSNQDYKVADISLADWGRKEIKIAESEMPGLMETRREFAAQKPLKGARIAGCLHMTIQTAVLIETLQELGAEVRWSSCNIFSTQDQAAAAVAANGTPVFAWKGETEEEYWWCIEQTINGPDGWKPNMLLDDGGDLTAVIHEQYPDMMKDIYGVSEETTTGVHRLYEMSRKGELGMPAFNVNDSVTKSKFDNLYGCRESLVDSIKRATDVMIAGKVAVVAGFGDVGKGSAQSLRGLGAQVWVTEVDPICALQASMDGYKVVTMEEAAPVADIFVTATGNYNVITHDHMKAMKDEAIVCNIGHFDNEIDVASLKQYKWDEIKPQVDHVEFPDGKKITLLAEGRLVNLGCATGHPSFVMSNSFTNQVMAQMELYNNPGKYEKDVYVLPKHLDEKVAALHLGRVGANLTRLSEEQAGYIGVSVDGPFKPEWYRY</sequence>
<reference key="1">
    <citation type="submission" date="2006-12" db="EMBL/GenBank/DDBJ databases">
        <title>Complete sequence of Halorhodospira halophila SL1.</title>
        <authorList>
            <consortium name="US DOE Joint Genome Institute"/>
            <person name="Copeland A."/>
            <person name="Lucas S."/>
            <person name="Lapidus A."/>
            <person name="Barry K."/>
            <person name="Detter J.C."/>
            <person name="Glavina del Rio T."/>
            <person name="Hammon N."/>
            <person name="Israni S."/>
            <person name="Dalin E."/>
            <person name="Tice H."/>
            <person name="Pitluck S."/>
            <person name="Saunders E."/>
            <person name="Brettin T."/>
            <person name="Bruce D."/>
            <person name="Han C."/>
            <person name="Tapia R."/>
            <person name="Schmutz J."/>
            <person name="Larimer F."/>
            <person name="Land M."/>
            <person name="Hauser L."/>
            <person name="Kyrpides N."/>
            <person name="Mikhailova N."/>
            <person name="Hoff W."/>
            <person name="Richardson P."/>
        </authorList>
    </citation>
    <scope>NUCLEOTIDE SEQUENCE [LARGE SCALE GENOMIC DNA]</scope>
    <source>
        <strain>DSM 244 / SL1</strain>
    </source>
</reference>
<proteinExistence type="inferred from homology"/>
<accession>A1WXM7</accession>
<comment type="function">
    <text evidence="1">May play a key role in the regulation of the intracellular concentration of adenosylhomocysteine.</text>
</comment>
<comment type="catalytic activity">
    <reaction evidence="1">
        <text>S-adenosyl-L-homocysteine + H2O = L-homocysteine + adenosine</text>
        <dbReference type="Rhea" id="RHEA:21708"/>
        <dbReference type="ChEBI" id="CHEBI:15377"/>
        <dbReference type="ChEBI" id="CHEBI:16335"/>
        <dbReference type="ChEBI" id="CHEBI:57856"/>
        <dbReference type="ChEBI" id="CHEBI:58199"/>
        <dbReference type="EC" id="3.13.2.1"/>
    </reaction>
</comment>
<comment type="cofactor">
    <cofactor evidence="1">
        <name>NAD(+)</name>
        <dbReference type="ChEBI" id="CHEBI:57540"/>
    </cofactor>
    <text evidence="1">Binds 1 NAD(+) per subunit.</text>
</comment>
<comment type="pathway">
    <text evidence="1">Amino-acid biosynthesis; L-homocysteine biosynthesis; L-homocysteine from S-adenosyl-L-homocysteine: step 1/1.</text>
</comment>
<comment type="subcellular location">
    <subcellularLocation>
        <location evidence="1">Cytoplasm</location>
    </subcellularLocation>
</comment>
<comment type="similarity">
    <text evidence="1">Belongs to the adenosylhomocysteinase family.</text>
</comment>
<protein>
    <recommendedName>
        <fullName evidence="1">Adenosylhomocysteinase</fullName>
        <ecNumber evidence="1">3.13.2.1</ecNumber>
    </recommendedName>
    <alternativeName>
        <fullName evidence="1">S-adenosyl-L-homocysteine hydrolase</fullName>
        <shortName evidence="1">AdoHcyase</shortName>
    </alternativeName>
</protein>
<organism>
    <name type="scientific">Halorhodospira halophila (strain DSM 244 / SL1)</name>
    <name type="common">Ectothiorhodospira halophila (strain DSM 244 / SL1)</name>
    <dbReference type="NCBI Taxonomy" id="349124"/>
    <lineage>
        <taxon>Bacteria</taxon>
        <taxon>Pseudomonadati</taxon>
        <taxon>Pseudomonadota</taxon>
        <taxon>Gammaproteobacteria</taxon>
        <taxon>Chromatiales</taxon>
        <taxon>Ectothiorhodospiraceae</taxon>
        <taxon>Halorhodospira</taxon>
    </lineage>
</organism>
<evidence type="ECO:0000255" key="1">
    <source>
        <dbReference type="HAMAP-Rule" id="MF_00563"/>
    </source>
</evidence>